<protein>
    <recommendedName>
        <fullName evidence="1">Ribonuclease Y</fullName>
        <shortName evidence="1">RNase Y</shortName>
        <ecNumber evidence="1">3.1.-.-</ecNumber>
    </recommendedName>
</protein>
<feature type="chain" id="PRO_0000344903" description="Ribonuclease Y">
    <location>
        <begin position="1"/>
        <end position="518"/>
    </location>
</feature>
<feature type="transmembrane region" description="Helical" evidence="1">
    <location>
        <begin position="2"/>
        <end position="22"/>
    </location>
</feature>
<feature type="domain" description="KH" evidence="1">
    <location>
        <begin position="208"/>
        <end position="271"/>
    </location>
</feature>
<feature type="domain" description="HD" evidence="2">
    <location>
        <begin position="334"/>
        <end position="427"/>
    </location>
</feature>
<proteinExistence type="inferred from homology"/>
<dbReference type="EC" id="3.1.-.-" evidence="1"/>
<dbReference type="EMBL" id="CP000414">
    <property type="protein sequence ID" value="ABJ62811.1"/>
    <property type="molecule type" value="Genomic_DNA"/>
</dbReference>
<dbReference type="RefSeq" id="WP_011680331.1">
    <property type="nucleotide sequence ID" value="NC_008531.1"/>
</dbReference>
<dbReference type="SMR" id="Q03VG1"/>
<dbReference type="EnsemblBacteria" id="ABJ62811">
    <property type="protein sequence ID" value="ABJ62811"/>
    <property type="gene ID" value="LEUM_1724"/>
</dbReference>
<dbReference type="GeneID" id="29577599"/>
<dbReference type="KEGG" id="lme:LEUM_1724"/>
<dbReference type="eggNOG" id="COG1418">
    <property type="taxonomic scope" value="Bacteria"/>
</dbReference>
<dbReference type="HOGENOM" id="CLU_028328_1_0_9"/>
<dbReference type="Proteomes" id="UP000000362">
    <property type="component" value="Chromosome"/>
</dbReference>
<dbReference type="GO" id="GO:0005886">
    <property type="term" value="C:plasma membrane"/>
    <property type="evidence" value="ECO:0007669"/>
    <property type="project" value="UniProtKB-SubCell"/>
</dbReference>
<dbReference type="GO" id="GO:0003723">
    <property type="term" value="F:RNA binding"/>
    <property type="evidence" value="ECO:0007669"/>
    <property type="project" value="UniProtKB-UniRule"/>
</dbReference>
<dbReference type="GO" id="GO:0004521">
    <property type="term" value="F:RNA endonuclease activity"/>
    <property type="evidence" value="ECO:0007669"/>
    <property type="project" value="UniProtKB-UniRule"/>
</dbReference>
<dbReference type="GO" id="GO:0006402">
    <property type="term" value="P:mRNA catabolic process"/>
    <property type="evidence" value="ECO:0007669"/>
    <property type="project" value="UniProtKB-UniRule"/>
</dbReference>
<dbReference type="CDD" id="cd00077">
    <property type="entry name" value="HDc"/>
    <property type="match status" value="1"/>
</dbReference>
<dbReference type="CDD" id="cd22431">
    <property type="entry name" value="KH-I_RNaseY"/>
    <property type="match status" value="1"/>
</dbReference>
<dbReference type="Gene3D" id="1.10.3210.10">
    <property type="entry name" value="Hypothetical protein af1432"/>
    <property type="match status" value="1"/>
</dbReference>
<dbReference type="Gene3D" id="3.30.1370.10">
    <property type="entry name" value="K Homology domain, type 1"/>
    <property type="match status" value="1"/>
</dbReference>
<dbReference type="HAMAP" id="MF_00335">
    <property type="entry name" value="RNase_Y"/>
    <property type="match status" value="1"/>
</dbReference>
<dbReference type="InterPro" id="IPR003607">
    <property type="entry name" value="HD/PDEase_dom"/>
</dbReference>
<dbReference type="InterPro" id="IPR006674">
    <property type="entry name" value="HD_domain"/>
</dbReference>
<dbReference type="InterPro" id="IPR006675">
    <property type="entry name" value="HDIG_dom"/>
</dbReference>
<dbReference type="InterPro" id="IPR004087">
    <property type="entry name" value="KH_dom"/>
</dbReference>
<dbReference type="InterPro" id="IPR004088">
    <property type="entry name" value="KH_dom_type_1"/>
</dbReference>
<dbReference type="InterPro" id="IPR036612">
    <property type="entry name" value="KH_dom_type_1_sf"/>
</dbReference>
<dbReference type="InterPro" id="IPR017705">
    <property type="entry name" value="Ribonuclease_Y"/>
</dbReference>
<dbReference type="InterPro" id="IPR022711">
    <property type="entry name" value="RNase_Y_N"/>
</dbReference>
<dbReference type="NCBIfam" id="TIGR00277">
    <property type="entry name" value="HDIG"/>
    <property type="match status" value="1"/>
</dbReference>
<dbReference type="NCBIfam" id="TIGR03319">
    <property type="entry name" value="RNase_Y"/>
    <property type="match status" value="1"/>
</dbReference>
<dbReference type="PANTHER" id="PTHR12826">
    <property type="entry name" value="RIBONUCLEASE Y"/>
    <property type="match status" value="1"/>
</dbReference>
<dbReference type="PANTHER" id="PTHR12826:SF15">
    <property type="entry name" value="RIBONUCLEASE Y"/>
    <property type="match status" value="1"/>
</dbReference>
<dbReference type="Pfam" id="PF01966">
    <property type="entry name" value="HD"/>
    <property type="match status" value="1"/>
</dbReference>
<dbReference type="Pfam" id="PF00013">
    <property type="entry name" value="KH_1"/>
    <property type="match status" value="1"/>
</dbReference>
<dbReference type="Pfam" id="PF12072">
    <property type="entry name" value="RNase_Y_N"/>
    <property type="match status" value="1"/>
</dbReference>
<dbReference type="SMART" id="SM00471">
    <property type="entry name" value="HDc"/>
    <property type="match status" value="1"/>
</dbReference>
<dbReference type="SMART" id="SM00322">
    <property type="entry name" value="KH"/>
    <property type="match status" value="1"/>
</dbReference>
<dbReference type="SUPFAM" id="SSF54791">
    <property type="entry name" value="Eukaryotic type KH-domain (KH-domain type I)"/>
    <property type="match status" value="1"/>
</dbReference>
<dbReference type="SUPFAM" id="SSF109604">
    <property type="entry name" value="HD-domain/PDEase-like"/>
    <property type="match status" value="1"/>
</dbReference>
<dbReference type="PROSITE" id="PS51831">
    <property type="entry name" value="HD"/>
    <property type="match status" value="1"/>
</dbReference>
<dbReference type="PROSITE" id="PS50084">
    <property type="entry name" value="KH_TYPE_1"/>
    <property type="match status" value="1"/>
</dbReference>
<organism>
    <name type="scientific">Leuconostoc mesenteroides subsp. mesenteroides (strain ATCC 8293 / DSM 20343 / BCRC 11652 / CCM 1803 / JCM 6124 / NCDO 523 / NBRC 100496 / NCIMB 8023 / NCTC 12954 / NRRL B-1118 / 37Y)</name>
    <dbReference type="NCBI Taxonomy" id="203120"/>
    <lineage>
        <taxon>Bacteria</taxon>
        <taxon>Bacillati</taxon>
        <taxon>Bacillota</taxon>
        <taxon>Bacilli</taxon>
        <taxon>Lactobacillales</taxon>
        <taxon>Lactobacillaceae</taxon>
        <taxon>Leuconostoc</taxon>
    </lineage>
</organism>
<gene>
    <name evidence="1" type="primary">rny</name>
    <name type="ordered locus">LEUM_1724</name>
</gene>
<comment type="function">
    <text evidence="1">Endoribonuclease that initiates mRNA decay.</text>
</comment>
<comment type="subcellular location">
    <subcellularLocation>
        <location evidence="1">Cell membrane</location>
        <topology evidence="1">Single-pass membrane protein</topology>
    </subcellularLocation>
</comment>
<comment type="similarity">
    <text evidence="1">Belongs to the RNase Y family.</text>
</comment>
<evidence type="ECO:0000255" key="1">
    <source>
        <dbReference type="HAMAP-Rule" id="MF_00335"/>
    </source>
</evidence>
<evidence type="ECO:0000255" key="2">
    <source>
        <dbReference type="PROSITE-ProRule" id="PRU01175"/>
    </source>
</evidence>
<keyword id="KW-1003">Cell membrane</keyword>
<keyword id="KW-0255">Endonuclease</keyword>
<keyword id="KW-0378">Hydrolase</keyword>
<keyword id="KW-0472">Membrane</keyword>
<keyword id="KW-0540">Nuclease</keyword>
<keyword id="KW-1185">Reference proteome</keyword>
<keyword id="KW-0694">RNA-binding</keyword>
<keyword id="KW-0812">Transmembrane</keyword>
<keyword id="KW-1133">Transmembrane helix</keyword>
<name>RNY_LEUMM</name>
<accession>Q03VG1</accession>
<sequence>MVVTIISVFFAIVIGLGIGYYVRKSQDAHKVISAEQMATNILEQANNEAKSLKRAAEVDAKDLAQTYRNQVNDSYNDRQKHLQQQEQRLEDRINNLDKKDAALNQRDASLIQKENQVQTRLDDADKKEVLAQKLLTTQQDKLEEIAQLSPDEAKKQILSETKASLTRQRAALIKEAEEEATSEAEKRARNIIVQAIQRSSADSVADVTVSVVNLPSEDMKGRIIGREGRNIRTLESLTGIDLIIDDTPESVVLSGFDPVRREIAKMALDALVADGRINPSRIEEMVEKSRRQMDETIREKGEQAVFELGLRGMHPDLIKMIGRMNYRTSYGQNVLQHSIEVAKLAGMMAAELKMDVALAKRAGLIHDIGKAVDAEVEGSHVELGVRLAEKFNEKPIVINAIASHHGDVAAISPIAELVAAADAISAARPGARSESLENYVQRLKDLEAIANNNQEVHTAYAIQAGREVRVIVEPTKVTDLQAKVLAHDIKSDVEEKLEYPGHIKVTVIRETRAIDYAH</sequence>
<reference key="1">
    <citation type="journal article" date="2006" name="Proc. Natl. Acad. Sci. U.S.A.">
        <title>Comparative genomics of the lactic acid bacteria.</title>
        <authorList>
            <person name="Makarova K.S."/>
            <person name="Slesarev A."/>
            <person name="Wolf Y.I."/>
            <person name="Sorokin A."/>
            <person name="Mirkin B."/>
            <person name="Koonin E.V."/>
            <person name="Pavlov A."/>
            <person name="Pavlova N."/>
            <person name="Karamychev V."/>
            <person name="Polouchine N."/>
            <person name="Shakhova V."/>
            <person name="Grigoriev I."/>
            <person name="Lou Y."/>
            <person name="Rohksar D."/>
            <person name="Lucas S."/>
            <person name="Huang K."/>
            <person name="Goodstein D.M."/>
            <person name="Hawkins T."/>
            <person name="Plengvidhya V."/>
            <person name="Welker D."/>
            <person name="Hughes J."/>
            <person name="Goh Y."/>
            <person name="Benson A."/>
            <person name="Baldwin K."/>
            <person name="Lee J.-H."/>
            <person name="Diaz-Muniz I."/>
            <person name="Dosti B."/>
            <person name="Smeianov V."/>
            <person name="Wechter W."/>
            <person name="Barabote R."/>
            <person name="Lorca G."/>
            <person name="Altermann E."/>
            <person name="Barrangou R."/>
            <person name="Ganesan B."/>
            <person name="Xie Y."/>
            <person name="Rawsthorne H."/>
            <person name="Tamir D."/>
            <person name="Parker C."/>
            <person name="Breidt F."/>
            <person name="Broadbent J.R."/>
            <person name="Hutkins R."/>
            <person name="O'Sullivan D."/>
            <person name="Steele J."/>
            <person name="Unlu G."/>
            <person name="Saier M.H. Jr."/>
            <person name="Klaenhammer T."/>
            <person name="Richardson P."/>
            <person name="Kozyavkin S."/>
            <person name="Weimer B.C."/>
            <person name="Mills D.A."/>
        </authorList>
    </citation>
    <scope>NUCLEOTIDE SEQUENCE [LARGE SCALE GENOMIC DNA]</scope>
    <source>
        <strain>ATCC 8293 / DSM 20343 / BCRC 11652 / CCM 1803 / JCM 6124 / NCDO 523 / NBRC 100496 / NCIMB 8023 / NCTC 12954 / NRRL B-1118 / 37Y</strain>
    </source>
</reference>